<name>IF4G1_ORYSJ</name>
<accession>Q84PB3</accession>
<accession>Q0JC04</accession>
<accession>Q7XT80</accession>
<reference key="1">
    <citation type="journal article" date="2003" name="Proc. Natl. Acad. Sci. U.S.A.">
        <title>A network of rice genes associated with stress response and seed development.</title>
        <authorList>
            <person name="Cooper B."/>
            <person name="Clarke J.D."/>
            <person name="Budworth P."/>
            <person name="Kreps J."/>
            <person name="Hutchison D."/>
            <person name="Park S."/>
            <person name="Guimil S."/>
            <person name="Dunn M."/>
            <person name="Luginbuehl P."/>
            <person name="Ellero C."/>
            <person name="Goff S.A."/>
            <person name="Glazebrook J."/>
        </authorList>
    </citation>
    <scope>NUCLEOTIDE SEQUENCE [MRNA]</scope>
    <source>
        <strain>cv. Nipponbare</strain>
    </source>
</reference>
<reference key="2">
    <citation type="journal article" date="2002" name="Nature">
        <title>Sequence and analysis of rice chromosome 4.</title>
        <authorList>
            <person name="Feng Q."/>
            <person name="Zhang Y."/>
            <person name="Hao P."/>
            <person name="Wang S."/>
            <person name="Fu G."/>
            <person name="Huang Y."/>
            <person name="Li Y."/>
            <person name="Zhu J."/>
            <person name="Liu Y."/>
            <person name="Hu X."/>
            <person name="Jia P."/>
            <person name="Zhang Y."/>
            <person name="Zhao Q."/>
            <person name="Ying K."/>
            <person name="Yu S."/>
            <person name="Tang Y."/>
            <person name="Weng Q."/>
            <person name="Zhang L."/>
            <person name="Lu Y."/>
            <person name="Mu J."/>
            <person name="Lu Y."/>
            <person name="Zhang L.S."/>
            <person name="Yu Z."/>
            <person name="Fan D."/>
            <person name="Liu X."/>
            <person name="Lu T."/>
            <person name="Li C."/>
            <person name="Wu Y."/>
            <person name="Sun T."/>
            <person name="Lei H."/>
            <person name="Li T."/>
            <person name="Hu H."/>
            <person name="Guan J."/>
            <person name="Wu M."/>
            <person name="Zhang R."/>
            <person name="Zhou B."/>
            <person name="Chen Z."/>
            <person name="Chen L."/>
            <person name="Jin Z."/>
            <person name="Wang R."/>
            <person name="Yin H."/>
            <person name="Cai Z."/>
            <person name="Ren S."/>
            <person name="Lv G."/>
            <person name="Gu W."/>
            <person name="Zhu G."/>
            <person name="Tu Y."/>
            <person name="Jia J."/>
            <person name="Zhang Y."/>
            <person name="Chen J."/>
            <person name="Kang H."/>
            <person name="Chen X."/>
            <person name="Shao C."/>
            <person name="Sun Y."/>
            <person name="Hu Q."/>
            <person name="Zhang X."/>
            <person name="Zhang W."/>
            <person name="Wang L."/>
            <person name="Ding C."/>
            <person name="Sheng H."/>
            <person name="Gu J."/>
            <person name="Chen S."/>
            <person name="Ni L."/>
            <person name="Zhu F."/>
            <person name="Chen W."/>
            <person name="Lan L."/>
            <person name="Lai Y."/>
            <person name="Cheng Z."/>
            <person name="Gu M."/>
            <person name="Jiang J."/>
            <person name="Li J."/>
            <person name="Hong G."/>
            <person name="Xue Y."/>
            <person name="Han B."/>
        </authorList>
    </citation>
    <scope>NUCLEOTIDE SEQUENCE [LARGE SCALE GENOMIC DNA]</scope>
    <source>
        <strain>cv. Nipponbare</strain>
    </source>
</reference>
<reference key="3">
    <citation type="journal article" date="2005" name="Nature">
        <title>The map-based sequence of the rice genome.</title>
        <authorList>
            <consortium name="International rice genome sequencing project (IRGSP)"/>
        </authorList>
    </citation>
    <scope>NUCLEOTIDE SEQUENCE [LARGE SCALE GENOMIC DNA]</scope>
    <source>
        <strain>cv. Nipponbare</strain>
    </source>
</reference>
<reference key="4">
    <citation type="journal article" date="2008" name="Nucleic Acids Res.">
        <title>The rice annotation project database (RAP-DB): 2008 update.</title>
        <authorList>
            <consortium name="The rice annotation project (RAP)"/>
        </authorList>
    </citation>
    <scope>GENOME REANNOTATION</scope>
    <source>
        <strain>cv. Nipponbare</strain>
    </source>
</reference>
<reference key="5">
    <citation type="journal article" date="2013" name="Rice">
        <title>Improvement of the Oryza sativa Nipponbare reference genome using next generation sequence and optical map data.</title>
        <authorList>
            <person name="Kawahara Y."/>
            <person name="de la Bastide M."/>
            <person name="Hamilton J.P."/>
            <person name="Kanamori H."/>
            <person name="McCombie W.R."/>
            <person name="Ouyang S."/>
            <person name="Schwartz D.C."/>
            <person name="Tanaka T."/>
            <person name="Wu J."/>
            <person name="Zhou S."/>
            <person name="Childs K.L."/>
            <person name="Davidson R.M."/>
            <person name="Lin H."/>
            <person name="Quesada-Ocampo L."/>
            <person name="Vaillancourt B."/>
            <person name="Sakai H."/>
            <person name="Lee S.S."/>
            <person name="Kim J."/>
            <person name="Numa H."/>
            <person name="Itoh T."/>
            <person name="Buell C.R."/>
            <person name="Matsumoto T."/>
        </authorList>
    </citation>
    <scope>GENOME REANNOTATION</scope>
    <source>
        <strain>cv. Nipponbare</strain>
    </source>
</reference>
<reference key="6">
    <citation type="journal article" date="2006" name="Plant J.">
        <title>Mutations in the eIF(iso)4G translation initiation factor confer high resistance of rice to Rice yellow mottle virus.</title>
        <authorList>
            <person name="Albar L."/>
            <person name="Bangratz-Reyser M."/>
            <person name="Hebrard E."/>
            <person name="Ndjiondjop M.N."/>
            <person name="Jones M."/>
            <person name="Ghesquiere A."/>
        </authorList>
    </citation>
    <scope>DISRUPTION PHENOTYPE</scope>
    <scope>FUNCTION</scope>
</reference>
<reference key="7">
    <citation type="journal article" date="2007" name="Theor. Appl. Genet.">
        <title>Evaluation of genes from eIF4E and eIF4G multigenic families as potential candidates for partial resistance QTLs to Rice yellow mottle virus in rice.</title>
        <authorList>
            <person name="Boisnard A."/>
            <person name="Albar L."/>
            <person name="Thiemele D."/>
            <person name="Rondeau M."/>
            <person name="Ghesquiere A."/>
        </authorList>
    </citation>
    <scope>GENE FAMILY</scope>
</reference>
<keyword id="KW-0396">Initiation factor</keyword>
<keyword id="KW-0648">Protein biosynthesis</keyword>
<keyword id="KW-1185">Reference proteome</keyword>
<keyword id="KW-0810">Translation regulation</keyword>
<comment type="function">
    <text evidence="3">Plays a role in the accumulation of a sobemovirus (RYMV) during viral infection.</text>
</comment>
<comment type="subunit">
    <text>EIF4F is a multi-subunit complex, the composition of which varies with external and internal environmental conditions. It is composed of at least EIF4A, EIF4E and EIF4G. In higher plants two isoforms of EIF4F have been identified, named isoform EIF4F and isoform EIF(iso)4F. Isoform EIF4F has subunits p220 and p26, whereas isoform EIF(iso)4F has subunits p82 and p28.</text>
</comment>
<comment type="disruption phenotype">
    <text evidence="3">Displays resistance to rice yellow mottle virus (RYMV) infection.</text>
</comment>
<comment type="similarity">
    <text evidence="4">Belongs to the eukaryotic initiation factor 4G family.</text>
</comment>
<comment type="sequence caution" evidence="4">
    <conflict type="erroneous gene model prediction">
        <sequence resource="EMBL-CDS" id="BAF15133"/>
    </conflict>
</comment>
<comment type="sequence caution" evidence="4">
    <conflict type="erroneous gene model prediction">
        <sequence resource="EMBL-CDS" id="CAE01628"/>
    </conflict>
</comment>
<evidence type="ECO:0000255" key="1">
    <source>
        <dbReference type="PROSITE-ProRule" id="PRU00698"/>
    </source>
</evidence>
<evidence type="ECO:0000256" key="2">
    <source>
        <dbReference type="SAM" id="MobiDB-lite"/>
    </source>
</evidence>
<evidence type="ECO:0000269" key="3">
    <source>
    </source>
</evidence>
<evidence type="ECO:0000305" key="4"/>
<feature type="chain" id="PRO_0000420545" description="Eukaryotic translation initiation factor isoform 4G-1">
    <location>
        <begin position="1"/>
        <end position="793"/>
    </location>
</feature>
<feature type="domain" description="MIF4G" evidence="1">
    <location>
        <begin position="208"/>
        <end position="435"/>
    </location>
</feature>
<feature type="domain" description="MI" evidence="1">
    <location>
        <begin position="627"/>
        <end position="749"/>
    </location>
</feature>
<feature type="region of interest" description="Disordered" evidence="2">
    <location>
        <begin position="1"/>
        <end position="23"/>
    </location>
</feature>
<feature type="region of interest" description="Disordered" evidence="2">
    <location>
        <begin position="105"/>
        <end position="129"/>
    </location>
</feature>
<feature type="region of interest" description="Disordered" evidence="2">
    <location>
        <begin position="462"/>
        <end position="606"/>
    </location>
</feature>
<feature type="compositionally biased region" description="Polar residues" evidence="2">
    <location>
        <begin position="107"/>
        <end position="117"/>
    </location>
</feature>
<feature type="compositionally biased region" description="Basic and acidic residues" evidence="2">
    <location>
        <begin position="120"/>
        <end position="129"/>
    </location>
</feature>
<feature type="compositionally biased region" description="Low complexity" evidence="2">
    <location>
        <begin position="544"/>
        <end position="557"/>
    </location>
</feature>
<feature type="compositionally biased region" description="Polar residues" evidence="2">
    <location>
        <begin position="587"/>
        <end position="597"/>
    </location>
</feature>
<feature type="sequence conflict" description="In Ref. 1; AAO72569." evidence="4" ref="1">
    <original>RIN</original>
    <variation>IK</variation>
    <location>
        <begin position="84"/>
        <end position="86"/>
    </location>
</feature>
<feature type="sequence conflict" description="In Ref. 1; AAO72569." evidence="4" ref="1">
    <original>M</original>
    <variation>I</variation>
    <location>
        <position position="456"/>
    </location>
</feature>
<feature type="sequence conflict" description="In Ref. 1; AAO72569." evidence="4" ref="1">
    <original>L</original>
    <variation>P</variation>
    <location>
        <position position="590"/>
    </location>
</feature>
<feature type="sequence conflict" description="In Ref. 1; AAO72569." evidence="4" ref="1">
    <original>A</original>
    <variation>T</variation>
    <location>
        <position position="692"/>
    </location>
</feature>
<feature type="sequence conflict" description="In Ref. 1; AAO72569." evidence="4" ref="1">
    <original>G</original>
    <variation>S</variation>
    <location>
        <position position="738"/>
    </location>
</feature>
<organism>
    <name type="scientific">Oryza sativa subsp. japonica</name>
    <name type="common">Rice</name>
    <dbReference type="NCBI Taxonomy" id="39947"/>
    <lineage>
        <taxon>Eukaryota</taxon>
        <taxon>Viridiplantae</taxon>
        <taxon>Streptophyta</taxon>
        <taxon>Embryophyta</taxon>
        <taxon>Tracheophyta</taxon>
        <taxon>Spermatophyta</taxon>
        <taxon>Magnoliopsida</taxon>
        <taxon>Liliopsida</taxon>
        <taxon>Poales</taxon>
        <taxon>Poaceae</taxon>
        <taxon>BOP clade</taxon>
        <taxon>Oryzoideae</taxon>
        <taxon>Oryzeae</taxon>
        <taxon>Oryzinae</taxon>
        <taxon>Oryza</taxon>
        <taxon>Oryza sativa</taxon>
    </lineage>
</organism>
<gene>
    <name type="ordered locus">Os04g0499300</name>
    <name type="ordered locus">LOC_Os04g42140</name>
    <name type="ORF">OSJNBa0029H02.9</name>
</gene>
<proteinExistence type="evidence at transcript level"/>
<dbReference type="EMBL" id="AY224450">
    <property type="protein sequence ID" value="AAO72569.1"/>
    <property type="molecule type" value="mRNA"/>
</dbReference>
<dbReference type="EMBL" id="AL606594">
    <property type="protein sequence ID" value="CAE01628.3"/>
    <property type="status" value="ALT_SEQ"/>
    <property type="molecule type" value="Genomic_DNA"/>
</dbReference>
<dbReference type="EMBL" id="AP008210">
    <property type="protein sequence ID" value="BAF15133.2"/>
    <property type="status" value="ALT_SEQ"/>
    <property type="molecule type" value="Genomic_DNA"/>
</dbReference>
<dbReference type="EMBL" id="AP014960">
    <property type="status" value="NOT_ANNOTATED_CDS"/>
    <property type="molecule type" value="Genomic_DNA"/>
</dbReference>
<dbReference type="RefSeq" id="XP_015635639.1">
    <property type="nucleotide sequence ID" value="XM_015780153.1"/>
</dbReference>
<dbReference type="SMR" id="Q84PB3"/>
<dbReference type="FunCoup" id="Q84PB3">
    <property type="interactions" value="2240"/>
</dbReference>
<dbReference type="IntAct" id="Q84PB3">
    <property type="interactions" value="1"/>
</dbReference>
<dbReference type="STRING" id="39947.Q84PB3"/>
<dbReference type="PaxDb" id="39947-Q84PB3"/>
<dbReference type="KEGG" id="dosa:Os04g0499300"/>
<dbReference type="eggNOG" id="KOG0401">
    <property type="taxonomic scope" value="Eukaryota"/>
</dbReference>
<dbReference type="HOGENOM" id="CLU_021872_0_0_1"/>
<dbReference type="InParanoid" id="Q84PB3"/>
<dbReference type="OrthoDB" id="514777at2759"/>
<dbReference type="Proteomes" id="UP000000763">
    <property type="component" value="Chromosome 4"/>
</dbReference>
<dbReference type="Proteomes" id="UP000059680">
    <property type="component" value="Chromosome 4"/>
</dbReference>
<dbReference type="GO" id="GO:0016281">
    <property type="term" value="C:eukaryotic translation initiation factor 4F complex"/>
    <property type="evidence" value="ECO:0000318"/>
    <property type="project" value="GO_Central"/>
</dbReference>
<dbReference type="GO" id="GO:0003729">
    <property type="term" value="F:mRNA binding"/>
    <property type="evidence" value="ECO:0000318"/>
    <property type="project" value="GO_Central"/>
</dbReference>
<dbReference type="GO" id="GO:0003743">
    <property type="term" value="F:translation initiation factor activity"/>
    <property type="evidence" value="ECO:0000318"/>
    <property type="project" value="GO_Central"/>
</dbReference>
<dbReference type="GO" id="GO:0006417">
    <property type="term" value="P:regulation of translation"/>
    <property type="evidence" value="ECO:0007669"/>
    <property type="project" value="UniProtKB-KW"/>
</dbReference>
<dbReference type="GO" id="GO:0006413">
    <property type="term" value="P:translational initiation"/>
    <property type="evidence" value="ECO:0000318"/>
    <property type="project" value="GO_Central"/>
</dbReference>
<dbReference type="FunFam" id="1.25.40.180:FF:000027">
    <property type="entry name" value="Eukaryotic translation initiation factor isoform 4G-2"/>
    <property type="match status" value="1"/>
</dbReference>
<dbReference type="FunFam" id="1.25.40.180:FF:000036">
    <property type="entry name" value="Eukaryotic translation initiation factor isoform 4G-2"/>
    <property type="match status" value="1"/>
</dbReference>
<dbReference type="Gene3D" id="1.25.40.180">
    <property type="match status" value="2"/>
</dbReference>
<dbReference type="InterPro" id="IPR016024">
    <property type="entry name" value="ARM-type_fold"/>
</dbReference>
<dbReference type="InterPro" id="IPR003891">
    <property type="entry name" value="Initiation_fac_eIF4g_MI"/>
</dbReference>
<dbReference type="InterPro" id="IPR003890">
    <property type="entry name" value="MIF4G-like_typ-3"/>
</dbReference>
<dbReference type="PANTHER" id="PTHR23253">
    <property type="entry name" value="EUKARYOTIC TRANSLATION INITIATION FACTOR 4 GAMMA"/>
    <property type="match status" value="1"/>
</dbReference>
<dbReference type="PANTHER" id="PTHR23253:SF81">
    <property type="entry name" value="EUKARYOTIC TRANSLATION INITIATION FACTOR ISOFORM 4G-1"/>
    <property type="match status" value="1"/>
</dbReference>
<dbReference type="Pfam" id="PF02847">
    <property type="entry name" value="MA3"/>
    <property type="match status" value="1"/>
</dbReference>
<dbReference type="Pfam" id="PF02854">
    <property type="entry name" value="MIF4G"/>
    <property type="match status" value="1"/>
</dbReference>
<dbReference type="SMART" id="SM00544">
    <property type="entry name" value="MA3"/>
    <property type="match status" value="1"/>
</dbReference>
<dbReference type="SMART" id="SM00543">
    <property type="entry name" value="MIF4G"/>
    <property type="match status" value="1"/>
</dbReference>
<dbReference type="SUPFAM" id="SSF48371">
    <property type="entry name" value="ARM repeat"/>
    <property type="match status" value="2"/>
</dbReference>
<dbReference type="PROSITE" id="PS51366">
    <property type="entry name" value="MI"/>
    <property type="match status" value="1"/>
</dbReference>
<protein>
    <recommendedName>
        <fullName>Eukaryotic translation initiation factor isoform 4G-1</fullName>
        <shortName>eIF(iso)-4G-1</shortName>
        <shortName>eIF(iso)4G-1</shortName>
    </recommendedName>
    <alternativeName>
        <fullName>Eukaryotic initiation factor iso-4F subunit p82</fullName>
        <shortName>eIF-(iso)4F p82 subunit</shortName>
    </alternativeName>
</protein>
<sequence length="793" mass="87022">MEKDHQPVISLRPGGGGGGPRPGRLFSPAFAAAASGSGDLLRSHVGGASKIGDPNFEVRERVRYTRDQLLELREIVDIPEAILRINQEIDIELHGEDQIWGRPESDVQVQTQTQAQPHNRYGETDNRDWRARTVQPPAANEEKSWDNIREAKAAHASSGRQQEQVNRQDQLNHQFASKAQVGPTPALIKAEVPWSARRGNLSEKDRVLKTVKGILNKLTPEKFDLLKGQLMESGITTADILKDVISLIFEKAVFEPTFCPMYAQLCSDLNEKLPSFPSEEPGGKEITFKRVLLNNCQEAFEGAESLRAEIAKLTGPDQEMERRDKERIVKLRTLGNIRLIGELLKQKMVPEKIVHHIVQELLGSGPDKKACPEEENVEAICQFFNTIGKQLDENPKSRRINDTYFIQMKELTTNLQLAPRLRFMVRDVVDLRSNNWVPRREEIKAKTISEIHDEAMKTLGLRPGATGLTRNGRNAPGGPLSPGGFPMNRPGTGGMMPGMPGTPGMPGSRKMPGMPGLDNDNWEVPRSKSMPRGDSLRNQGPLLNKPSSINKPSSINSRLLPHGSGALIGKSALLGSGGPPSRPSSLMASLTHTPAQTAPSPKPVSAAPAVVPVTDKAAGSSHEMPAAVQKKTVSLLEEYFGIRILDEAQQCIEELQCPEYYSEIVKEAINLALDKGPNFIDPLVRLLEHLHAKKIFKTEDLKTGCLLYAALLEDIGIDLPLAPALFGEVVARLSLSCGLSFEVVEEILKAVEDTYFRKGIFDAVMKTMGGNSSGQAILSSHAVVIDACNKLLK</sequence>